<feature type="chain" id="PRO_0000393424" description="L-proline cis-4-hydroxylase">
    <location>
        <begin position="1"/>
        <end position="280"/>
    </location>
</feature>
<feature type="binding site" evidence="1">
    <location>
        <position position="106"/>
    </location>
    <ligand>
        <name>Fe cation</name>
        <dbReference type="ChEBI" id="CHEBI:24875"/>
    </ligand>
</feature>
<feature type="binding site" evidence="1">
    <location>
        <position position="108"/>
    </location>
    <ligand>
        <name>Fe cation</name>
        <dbReference type="ChEBI" id="CHEBI:24875"/>
    </ligand>
</feature>
<feature type="binding site" evidence="1">
    <location>
        <position position="154"/>
    </location>
    <ligand>
        <name>Fe cation</name>
        <dbReference type="ChEBI" id="CHEBI:24875"/>
    </ligand>
</feature>
<feature type="binding site" evidence="2">
    <location>
        <position position="164"/>
    </location>
    <ligand>
        <name>2-oxoglutarate</name>
        <dbReference type="ChEBI" id="CHEBI:16810"/>
    </ligand>
</feature>
<feature type="strand" evidence="5">
    <location>
        <begin position="4"/>
        <end position="8"/>
    </location>
</feature>
<feature type="helix" evidence="5">
    <location>
        <begin position="13"/>
        <end position="23"/>
    </location>
</feature>
<feature type="helix" evidence="5">
    <location>
        <begin position="33"/>
        <end position="35"/>
    </location>
</feature>
<feature type="strand" evidence="5">
    <location>
        <begin position="36"/>
        <end position="50"/>
    </location>
</feature>
<feature type="helix" evidence="5">
    <location>
        <begin position="68"/>
        <end position="71"/>
    </location>
</feature>
<feature type="helix" evidence="5">
    <location>
        <begin position="74"/>
        <end position="83"/>
    </location>
</feature>
<feature type="helix" evidence="5">
    <location>
        <begin position="86"/>
        <end position="88"/>
    </location>
</feature>
<feature type="strand" evidence="5">
    <location>
        <begin position="89"/>
        <end position="97"/>
    </location>
</feature>
<feature type="strand" evidence="5">
    <location>
        <begin position="101"/>
        <end position="106"/>
    </location>
</feature>
<feature type="strand" evidence="5">
    <location>
        <begin position="112"/>
        <end position="114"/>
    </location>
</feature>
<feature type="strand" evidence="5">
    <location>
        <begin position="116"/>
        <end position="124"/>
    </location>
</feature>
<feature type="strand" evidence="5">
    <location>
        <begin position="129"/>
        <end position="133"/>
    </location>
</feature>
<feature type="strand" evidence="5">
    <location>
        <begin position="136"/>
        <end position="138"/>
    </location>
</feature>
<feature type="strand" evidence="5">
    <location>
        <begin position="144"/>
        <end position="148"/>
    </location>
</feature>
<feature type="strand" evidence="5">
    <location>
        <begin position="154"/>
        <end position="158"/>
    </location>
</feature>
<feature type="strand" evidence="5">
    <location>
        <begin position="160"/>
        <end position="162"/>
    </location>
</feature>
<feature type="strand" evidence="5">
    <location>
        <begin position="164"/>
        <end position="172"/>
    </location>
</feature>
<feature type="helix" evidence="5">
    <location>
        <begin position="177"/>
        <end position="179"/>
    </location>
</feature>
<feature type="helix" evidence="5">
    <location>
        <begin position="202"/>
        <end position="209"/>
    </location>
</feature>
<feature type="helix" evidence="5">
    <location>
        <begin position="210"/>
        <end position="213"/>
    </location>
</feature>
<feature type="turn" evidence="5">
    <location>
        <begin position="217"/>
        <end position="219"/>
    </location>
</feature>
<feature type="helix" evidence="5">
    <location>
        <begin position="220"/>
        <end position="229"/>
    </location>
</feature>
<feature type="helix" evidence="5">
    <location>
        <begin position="230"/>
        <end position="232"/>
    </location>
</feature>
<feature type="strand" evidence="5">
    <location>
        <begin position="234"/>
        <end position="236"/>
    </location>
</feature>
<feature type="helix" evidence="5">
    <location>
        <begin position="240"/>
        <end position="252"/>
    </location>
</feature>
<feature type="helix" evidence="5">
    <location>
        <begin position="255"/>
        <end position="269"/>
    </location>
</feature>
<evidence type="ECO:0000250" key="1"/>
<evidence type="ECO:0000255" key="2"/>
<evidence type="ECO:0000269" key="3">
    <source>
    </source>
</evidence>
<evidence type="ECO:0000305" key="4"/>
<evidence type="ECO:0007829" key="5">
    <source>
        <dbReference type="PDB" id="4P7X"/>
    </source>
</evidence>
<protein>
    <recommendedName>
        <fullName>L-proline cis-4-hydroxylase</fullName>
        <shortName>P4H</shortName>
        <ecNumber evidence="3">1.14.11.56</ecNumber>
    </recommendedName>
</protein>
<accession>Q989T9</accession>
<proteinExistence type="evidence at protein level"/>
<reference key="1">
    <citation type="journal article" date="2000" name="DNA Res.">
        <title>Complete genome structure of the nitrogen-fixing symbiotic bacterium Mesorhizobium loti.</title>
        <authorList>
            <person name="Kaneko T."/>
            <person name="Nakamura Y."/>
            <person name="Sato S."/>
            <person name="Asamizu E."/>
            <person name="Kato T."/>
            <person name="Sasamoto S."/>
            <person name="Watanabe A."/>
            <person name="Idesawa K."/>
            <person name="Ishikawa A."/>
            <person name="Kawashima K."/>
            <person name="Kimura T."/>
            <person name="Kishida Y."/>
            <person name="Kiyokawa C."/>
            <person name="Kohara M."/>
            <person name="Matsumoto M."/>
            <person name="Matsuno A."/>
            <person name="Mochizuki Y."/>
            <person name="Nakayama S."/>
            <person name="Nakazaki N."/>
            <person name="Shimpo S."/>
            <person name="Sugimoto M."/>
            <person name="Takeuchi C."/>
            <person name="Yamada M."/>
            <person name="Tabata S."/>
        </authorList>
    </citation>
    <scope>NUCLEOTIDE SEQUENCE [LARGE SCALE GENOMIC DNA]</scope>
    <source>
        <strain>LMG 29417 / CECT 9101 / MAFF 303099</strain>
    </source>
</reference>
<reference key="2">
    <citation type="journal article" date="2009" name="Biochem. Biophys. Res. Commun.">
        <title>Characterization of novel 2-oxoglutarate dependent dioxygenases converting L-proline to cis-4-hydroxy-l-proline.</title>
        <authorList>
            <person name="Hara R."/>
            <person name="Kino K."/>
        </authorList>
    </citation>
    <scope>FUNCTION</scope>
    <scope>CATALYTIC ACTIVITY</scope>
    <scope>COFACTOR</scope>
    <scope>ACTIVITY REGULATION</scope>
    <scope>BIOPHYSICOCHEMICAL PROPERTIES</scope>
    <scope>BIOTECHNOLOGY</scope>
    <source>
        <strain>LMG 29417 / CECT 9101 / MAFF 303099</strain>
    </source>
</reference>
<sequence>MTTRILGVVQLDQRRLTDDLAVLAKSNFSSEYSDFACGRWEFCMLRNQSGKQEEQRVVVHETPALATPLGQSLPYLNELLDNHFDRDSIRYARIIRISENACIIPHRDYLELEGKFIRVHLVLDTNEKCSNTEENNIFHMGRGEIWFLDASLPHSAGCFSPTPRLHLVVDIEGTRSLEEVAINVEQPSARNATVDTRKEWTDETLESVLGFSEIISEANYREIVAILAKLHFFHKVHCVDMYGWLKEICRRRGEPALIEKANSLERFYLIDRAAGEVMTY</sequence>
<organism>
    <name type="scientific">Mesorhizobium japonicum (strain LMG 29417 / CECT 9101 / MAFF 303099)</name>
    <name type="common">Mesorhizobium loti (strain MAFF 303099)</name>
    <dbReference type="NCBI Taxonomy" id="266835"/>
    <lineage>
        <taxon>Bacteria</taxon>
        <taxon>Pseudomonadati</taxon>
        <taxon>Pseudomonadota</taxon>
        <taxon>Alphaproteobacteria</taxon>
        <taxon>Hyphomicrobiales</taxon>
        <taxon>Phyllobacteriaceae</taxon>
        <taxon>Mesorhizobium</taxon>
    </lineage>
</organism>
<name>P4H_RHILO</name>
<keyword id="KW-0002">3D-structure</keyword>
<keyword id="KW-0223">Dioxygenase</keyword>
<keyword id="KW-0408">Iron</keyword>
<keyword id="KW-0479">Metal-binding</keyword>
<keyword id="KW-0560">Oxidoreductase</keyword>
<dbReference type="EC" id="1.14.11.56" evidence="3"/>
<dbReference type="EMBL" id="BA000012">
    <property type="protein sequence ID" value="BAB52605.1"/>
    <property type="molecule type" value="Genomic_DNA"/>
</dbReference>
<dbReference type="RefSeq" id="WP_010913924.1">
    <property type="nucleotide sequence ID" value="NC_002678.2"/>
</dbReference>
<dbReference type="PDB" id="4P7W">
    <property type="method" value="X-ray"/>
    <property type="resolution" value="1.80 A"/>
    <property type="chains" value="A=2-280"/>
</dbReference>
<dbReference type="PDB" id="4P7X">
    <property type="method" value="X-ray"/>
    <property type="resolution" value="1.30 A"/>
    <property type="chains" value="A=2-280"/>
</dbReference>
<dbReference type="PDBsum" id="4P7W"/>
<dbReference type="PDBsum" id="4P7X"/>
<dbReference type="SMR" id="Q989T9"/>
<dbReference type="KEGG" id="mlo:mlr6283"/>
<dbReference type="PATRIC" id="fig|266835.9.peg.4992"/>
<dbReference type="eggNOG" id="COG3555">
    <property type="taxonomic scope" value="Bacteria"/>
</dbReference>
<dbReference type="HOGENOM" id="CLU_962849_0_0_5"/>
<dbReference type="BRENDA" id="1.14.11.56">
    <property type="organism ID" value="3243"/>
</dbReference>
<dbReference type="EvolutionaryTrace" id="Q989T9"/>
<dbReference type="Proteomes" id="UP000000552">
    <property type="component" value="Chromosome"/>
</dbReference>
<dbReference type="GO" id="GO:0016706">
    <property type="term" value="F:2-oxoglutarate-dependent dioxygenase activity"/>
    <property type="evidence" value="ECO:0007669"/>
    <property type="project" value="InterPro"/>
</dbReference>
<dbReference type="GO" id="GO:0046872">
    <property type="term" value="F:metal ion binding"/>
    <property type="evidence" value="ECO:0007669"/>
    <property type="project" value="UniProtKB-KW"/>
</dbReference>
<dbReference type="Gene3D" id="2.60.120.330">
    <property type="entry name" value="B-lactam Antibiotic, Isopenicillin N Synthase, Chain"/>
    <property type="match status" value="1"/>
</dbReference>
<dbReference type="Gene3D" id="1.10.1720.10">
    <property type="entry name" value="L-proline 3-hydroxylase, C-terminal domain"/>
    <property type="match status" value="1"/>
</dbReference>
<dbReference type="InterPro" id="IPR007803">
    <property type="entry name" value="Asp/Arg/Pro-Hydrxlase"/>
</dbReference>
<dbReference type="InterPro" id="IPR027443">
    <property type="entry name" value="IPNS-like_sf"/>
</dbReference>
<dbReference type="InterPro" id="IPR008035">
    <property type="entry name" value="Pro_3_hydrox_C"/>
</dbReference>
<dbReference type="InterPro" id="IPR037037">
    <property type="entry name" value="Pro_3_hydrox_C_sf"/>
</dbReference>
<dbReference type="Pfam" id="PF05118">
    <property type="entry name" value="Asp_Arg_Hydrox"/>
    <property type="match status" value="1"/>
</dbReference>
<dbReference type="Pfam" id="PF05373">
    <property type="entry name" value="Pro_3_hydrox_C"/>
    <property type="match status" value="1"/>
</dbReference>
<dbReference type="SUPFAM" id="SSF51197">
    <property type="entry name" value="Clavaminate synthase-like"/>
    <property type="match status" value="1"/>
</dbReference>
<comment type="function">
    <text evidence="3">Dioxygenase that catalyzes the 2-oxoglutarate-dependent selective hydroxylation of free L-proline to cis-4-hydroxy-L-proline (cis-4-Hyp).</text>
</comment>
<comment type="catalytic activity">
    <reaction evidence="3">
        <text>L-proline + 2-oxoglutarate + O2 = cis-4-hydroxy-L-proline + succinate + CO2</text>
        <dbReference type="Rhea" id="RHEA:32127"/>
        <dbReference type="ChEBI" id="CHEBI:15379"/>
        <dbReference type="ChEBI" id="CHEBI:16526"/>
        <dbReference type="ChEBI" id="CHEBI:16810"/>
        <dbReference type="ChEBI" id="CHEBI:30031"/>
        <dbReference type="ChEBI" id="CHEBI:60039"/>
        <dbReference type="ChEBI" id="CHEBI:63727"/>
        <dbReference type="EC" id="1.14.11.56"/>
    </reaction>
</comment>
<comment type="cofactor">
    <cofactor evidence="3">
        <name>Fe(2+)</name>
        <dbReference type="ChEBI" id="CHEBI:29033"/>
    </cofactor>
    <text evidence="3">Binds 1 Fe(2+) ion.</text>
</comment>
<comment type="activity regulation">
    <text evidence="3">Inhibited by metal ions such as Co(2+), Zn(2+), Cu(2+) or Ni(2+). Is also inhibited by EDTA or diethylpyrocarbonate (DEPC) in vitro. Unlike the procollagen-proline cis-3- and trans-4-hydroxylases from mammals, does not necessarily require L-ascorbate for activity although it does increase the activity of the enzyme.</text>
</comment>
<comment type="biophysicochemical properties">
    <kinetics>
        <KM evidence="3">0.54 mM for L-proline</KM>
        <KM evidence="3">0.25 mM for 2-oxoglutarate</KM>
        <text>kcat is 24 sec(-1).</text>
    </kinetics>
    <phDependence>
        <text evidence="3">Optimum pH is 6.5.</text>
    </phDependence>
    <temperatureDependence>
        <text evidence="3">Optimum temperature is 25 degrees Celsius.</text>
    </temperatureDependence>
</comment>
<comment type="biotechnology">
    <text evidence="3">Would be one of the most promising biocatalysts for production of cis-4-hydroxy-L-proline (cis-4-Hyp), a compound which was clinically evaluated as an anticancer drug.</text>
</comment>
<comment type="similarity">
    <text evidence="4">Belongs to the L-proline cis-4-/cis-3-hydroxylase family.</text>
</comment>
<gene>
    <name type="ordered locus">mlr6283</name>
</gene>